<organism>
    <name type="scientific">Pseudothermotoga lettingae (strain ATCC BAA-301 / DSM 14385 / NBRC 107922 / TMO)</name>
    <name type="common">Thermotoga lettingae</name>
    <dbReference type="NCBI Taxonomy" id="416591"/>
    <lineage>
        <taxon>Bacteria</taxon>
        <taxon>Thermotogati</taxon>
        <taxon>Thermotogota</taxon>
        <taxon>Thermotogae</taxon>
        <taxon>Thermotogales</taxon>
        <taxon>Thermotogaceae</taxon>
        <taxon>Pseudothermotoga</taxon>
    </lineage>
</organism>
<proteinExistence type="inferred from homology"/>
<dbReference type="EMBL" id="CP000812">
    <property type="protein sequence ID" value="ABV33151.1"/>
    <property type="molecule type" value="Genomic_DNA"/>
</dbReference>
<dbReference type="RefSeq" id="WP_012002632.1">
    <property type="nucleotide sequence ID" value="NZ_BSDV01000001.1"/>
</dbReference>
<dbReference type="SMR" id="A8F4R7"/>
<dbReference type="STRING" id="416591.Tlet_0585"/>
<dbReference type="KEGG" id="tle:Tlet_0585"/>
<dbReference type="eggNOG" id="COG0092">
    <property type="taxonomic scope" value="Bacteria"/>
</dbReference>
<dbReference type="HOGENOM" id="CLU_058591_0_2_0"/>
<dbReference type="OrthoDB" id="9806396at2"/>
<dbReference type="Proteomes" id="UP000002016">
    <property type="component" value="Chromosome"/>
</dbReference>
<dbReference type="GO" id="GO:0022627">
    <property type="term" value="C:cytosolic small ribosomal subunit"/>
    <property type="evidence" value="ECO:0007669"/>
    <property type="project" value="TreeGrafter"/>
</dbReference>
<dbReference type="GO" id="GO:0003729">
    <property type="term" value="F:mRNA binding"/>
    <property type="evidence" value="ECO:0007669"/>
    <property type="project" value="UniProtKB-UniRule"/>
</dbReference>
<dbReference type="GO" id="GO:0019843">
    <property type="term" value="F:rRNA binding"/>
    <property type="evidence" value="ECO:0007669"/>
    <property type="project" value="UniProtKB-UniRule"/>
</dbReference>
<dbReference type="GO" id="GO:0003735">
    <property type="term" value="F:structural constituent of ribosome"/>
    <property type="evidence" value="ECO:0007669"/>
    <property type="project" value="InterPro"/>
</dbReference>
<dbReference type="GO" id="GO:0006412">
    <property type="term" value="P:translation"/>
    <property type="evidence" value="ECO:0007669"/>
    <property type="project" value="UniProtKB-UniRule"/>
</dbReference>
<dbReference type="CDD" id="cd02412">
    <property type="entry name" value="KH-II_30S_S3"/>
    <property type="match status" value="1"/>
</dbReference>
<dbReference type="FunFam" id="3.30.300.20:FF:000001">
    <property type="entry name" value="30S ribosomal protein S3"/>
    <property type="match status" value="1"/>
</dbReference>
<dbReference type="Gene3D" id="3.30.300.20">
    <property type="match status" value="1"/>
</dbReference>
<dbReference type="Gene3D" id="3.30.1140.32">
    <property type="entry name" value="Ribosomal protein S3, C-terminal domain"/>
    <property type="match status" value="1"/>
</dbReference>
<dbReference type="HAMAP" id="MF_01309_B">
    <property type="entry name" value="Ribosomal_uS3_B"/>
    <property type="match status" value="1"/>
</dbReference>
<dbReference type="InterPro" id="IPR004087">
    <property type="entry name" value="KH_dom"/>
</dbReference>
<dbReference type="InterPro" id="IPR015946">
    <property type="entry name" value="KH_dom-like_a/b"/>
</dbReference>
<dbReference type="InterPro" id="IPR004044">
    <property type="entry name" value="KH_dom_type_2"/>
</dbReference>
<dbReference type="InterPro" id="IPR009019">
    <property type="entry name" value="KH_sf_prok-type"/>
</dbReference>
<dbReference type="InterPro" id="IPR036419">
    <property type="entry name" value="Ribosomal_S3_C_sf"/>
</dbReference>
<dbReference type="InterPro" id="IPR005704">
    <property type="entry name" value="Ribosomal_uS3_bac-typ"/>
</dbReference>
<dbReference type="InterPro" id="IPR001351">
    <property type="entry name" value="Ribosomal_uS3_C"/>
</dbReference>
<dbReference type="InterPro" id="IPR018280">
    <property type="entry name" value="Ribosomal_uS3_CS"/>
</dbReference>
<dbReference type="NCBIfam" id="TIGR01009">
    <property type="entry name" value="rpsC_bact"/>
    <property type="match status" value="1"/>
</dbReference>
<dbReference type="PANTHER" id="PTHR11760">
    <property type="entry name" value="30S/40S RIBOSOMAL PROTEIN S3"/>
    <property type="match status" value="1"/>
</dbReference>
<dbReference type="PANTHER" id="PTHR11760:SF19">
    <property type="entry name" value="SMALL RIBOSOMAL SUBUNIT PROTEIN US3C"/>
    <property type="match status" value="1"/>
</dbReference>
<dbReference type="Pfam" id="PF07650">
    <property type="entry name" value="KH_2"/>
    <property type="match status" value="1"/>
</dbReference>
<dbReference type="Pfam" id="PF00189">
    <property type="entry name" value="Ribosomal_S3_C"/>
    <property type="match status" value="1"/>
</dbReference>
<dbReference type="SMART" id="SM00322">
    <property type="entry name" value="KH"/>
    <property type="match status" value="1"/>
</dbReference>
<dbReference type="SUPFAM" id="SSF54814">
    <property type="entry name" value="Prokaryotic type KH domain (KH-domain type II)"/>
    <property type="match status" value="1"/>
</dbReference>
<dbReference type="SUPFAM" id="SSF54821">
    <property type="entry name" value="Ribosomal protein S3 C-terminal domain"/>
    <property type="match status" value="1"/>
</dbReference>
<dbReference type="PROSITE" id="PS50823">
    <property type="entry name" value="KH_TYPE_2"/>
    <property type="match status" value="1"/>
</dbReference>
<dbReference type="PROSITE" id="PS00548">
    <property type="entry name" value="RIBOSOMAL_S3"/>
    <property type="match status" value="1"/>
</dbReference>
<name>RS3_PSELT</name>
<keyword id="KW-1185">Reference proteome</keyword>
<keyword id="KW-0687">Ribonucleoprotein</keyword>
<keyword id="KW-0689">Ribosomal protein</keyword>
<keyword id="KW-0694">RNA-binding</keyword>
<keyword id="KW-0699">rRNA-binding</keyword>
<comment type="function">
    <text evidence="1">Binds the lower part of the 30S subunit head. Binds mRNA in the 70S ribosome, positioning it for translation.</text>
</comment>
<comment type="subunit">
    <text evidence="1">Part of the 30S ribosomal subunit. Forms a tight complex with proteins S10 and S14.</text>
</comment>
<comment type="similarity">
    <text evidence="1">Belongs to the universal ribosomal protein uS3 family.</text>
</comment>
<sequence>MGQKVHPRGFRLGVSADWQTRWFNEKNYATWLKEDEEIRKVVKNAYSQAGISEVFIERPDNESVTITIKTARPGVIIGKKGAEIGKLREDLEKELNRRVIVNVEEIKTPETDAQLVAENIAGRIEKRASYKRAMKRALSDALRKGATGVKVMVSGRLAGAEIARREWYLRGRLPLQTVRAVVDYGTATAKTKYGTIGIKVWIYKGDAEV</sequence>
<accession>A8F4R7</accession>
<feature type="chain" id="PRO_1000086167" description="Small ribosomal subunit protein uS3">
    <location>
        <begin position="1"/>
        <end position="209"/>
    </location>
</feature>
<feature type="domain" description="KH type-2" evidence="1">
    <location>
        <begin position="38"/>
        <end position="107"/>
    </location>
</feature>
<protein>
    <recommendedName>
        <fullName evidence="1">Small ribosomal subunit protein uS3</fullName>
    </recommendedName>
    <alternativeName>
        <fullName evidence="2">30S ribosomal protein S3</fullName>
    </alternativeName>
</protein>
<reference key="1">
    <citation type="submission" date="2007-08" db="EMBL/GenBank/DDBJ databases">
        <title>Complete sequence of Thermotoga lettingae TMO.</title>
        <authorList>
            <consortium name="US DOE Joint Genome Institute"/>
            <person name="Copeland A."/>
            <person name="Lucas S."/>
            <person name="Lapidus A."/>
            <person name="Barry K."/>
            <person name="Glavina del Rio T."/>
            <person name="Dalin E."/>
            <person name="Tice H."/>
            <person name="Pitluck S."/>
            <person name="Foster B."/>
            <person name="Bruce D."/>
            <person name="Schmutz J."/>
            <person name="Larimer F."/>
            <person name="Land M."/>
            <person name="Hauser L."/>
            <person name="Kyrpides N."/>
            <person name="Mikhailova N."/>
            <person name="Nelson K."/>
            <person name="Gogarten J.P."/>
            <person name="Noll K."/>
            <person name="Richardson P."/>
        </authorList>
    </citation>
    <scope>NUCLEOTIDE SEQUENCE [LARGE SCALE GENOMIC DNA]</scope>
    <source>
        <strain>ATCC BAA-301 / DSM 14385 / NBRC 107922 / TMO</strain>
    </source>
</reference>
<gene>
    <name evidence="1" type="primary">rpsC</name>
    <name type="ordered locus">Tlet_0585</name>
</gene>
<evidence type="ECO:0000255" key="1">
    <source>
        <dbReference type="HAMAP-Rule" id="MF_01309"/>
    </source>
</evidence>
<evidence type="ECO:0000305" key="2"/>